<feature type="chain" id="PRO_0000265037" description="Putative 3-methyladenine DNA glycosylase">
    <location>
        <begin position="1"/>
        <end position="194"/>
    </location>
</feature>
<accession>Q1CYD8</accession>
<name>3MGH_MYXXD</name>
<keyword id="KW-0227">DNA damage</keyword>
<keyword id="KW-0234">DNA repair</keyword>
<keyword id="KW-0378">Hydrolase</keyword>
<keyword id="KW-1185">Reference proteome</keyword>
<comment type="similarity">
    <text evidence="1">Belongs to the DNA glycosylase MPG family.</text>
</comment>
<sequence>MNWLPESFYARPALVVARELLGALLVVEEGGQRRVGRIVETEAYIGEHDLACHAAKGLTPRTEVMFGPAGVAYVYLIYGMHHCFNVVTDATGAGAAVLVRAVEPVEGLPPGTRTDGPGRLCKALGLTRAHNRRGLCTPVLHLRPGTPVPESAVSRGPRIGVDYAGTWAAEPFRLWVRDSQHVSKGPPPGRRKPA</sequence>
<organism>
    <name type="scientific">Myxococcus xanthus (strain DK1622)</name>
    <dbReference type="NCBI Taxonomy" id="246197"/>
    <lineage>
        <taxon>Bacteria</taxon>
        <taxon>Pseudomonadati</taxon>
        <taxon>Myxococcota</taxon>
        <taxon>Myxococcia</taxon>
        <taxon>Myxococcales</taxon>
        <taxon>Cystobacterineae</taxon>
        <taxon>Myxococcaceae</taxon>
        <taxon>Myxococcus</taxon>
    </lineage>
</organism>
<protein>
    <recommendedName>
        <fullName evidence="1">Putative 3-methyladenine DNA glycosylase</fullName>
        <ecNumber evidence="1">3.2.2.-</ecNumber>
    </recommendedName>
</protein>
<gene>
    <name type="ordered locus">MXAN_6462</name>
</gene>
<reference key="1">
    <citation type="journal article" date="2006" name="Proc. Natl. Acad. Sci. U.S.A.">
        <title>Evolution of sensory complexity recorded in a myxobacterial genome.</title>
        <authorList>
            <person name="Goldman B.S."/>
            <person name="Nierman W.C."/>
            <person name="Kaiser D."/>
            <person name="Slater S.C."/>
            <person name="Durkin A.S."/>
            <person name="Eisen J.A."/>
            <person name="Ronning C.M."/>
            <person name="Barbazuk W.B."/>
            <person name="Blanchard M."/>
            <person name="Field C."/>
            <person name="Halling C."/>
            <person name="Hinkle G."/>
            <person name="Iartchuk O."/>
            <person name="Kim H.S."/>
            <person name="Mackenzie C."/>
            <person name="Madupu R."/>
            <person name="Miller N."/>
            <person name="Shvartsbeyn A."/>
            <person name="Sullivan S.A."/>
            <person name="Vaudin M."/>
            <person name="Wiegand R."/>
            <person name="Kaplan H.B."/>
        </authorList>
    </citation>
    <scope>NUCLEOTIDE SEQUENCE [LARGE SCALE GENOMIC DNA]</scope>
    <source>
        <strain>DK1622</strain>
    </source>
</reference>
<evidence type="ECO:0000255" key="1">
    <source>
        <dbReference type="HAMAP-Rule" id="MF_00527"/>
    </source>
</evidence>
<proteinExistence type="inferred from homology"/>
<dbReference type="EC" id="3.2.2.-" evidence="1"/>
<dbReference type="EMBL" id="CP000113">
    <property type="protein sequence ID" value="ABF91760.1"/>
    <property type="molecule type" value="Genomic_DNA"/>
</dbReference>
<dbReference type="RefSeq" id="WP_011556393.1">
    <property type="nucleotide sequence ID" value="NC_008095.1"/>
</dbReference>
<dbReference type="SMR" id="Q1CYD8"/>
<dbReference type="STRING" id="246197.MXAN_6462"/>
<dbReference type="EnsemblBacteria" id="ABF91760">
    <property type="protein sequence ID" value="ABF91760"/>
    <property type="gene ID" value="MXAN_6462"/>
</dbReference>
<dbReference type="GeneID" id="41363668"/>
<dbReference type="KEGG" id="mxa:MXAN_6462"/>
<dbReference type="eggNOG" id="COG2094">
    <property type="taxonomic scope" value="Bacteria"/>
</dbReference>
<dbReference type="HOGENOM" id="CLU_060471_4_1_7"/>
<dbReference type="OrthoDB" id="9794313at2"/>
<dbReference type="Proteomes" id="UP000002402">
    <property type="component" value="Chromosome"/>
</dbReference>
<dbReference type="GO" id="GO:0003905">
    <property type="term" value="F:alkylbase DNA N-glycosylase activity"/>
    <property type="evidence" value="ECO:0007669"/>
    <property type="project" value="InterPro"/>
</dbReference>
<dbReference type="GO" id="GO:0003677">
    <property type="term" value="F:DNA binding"/>
    <property type="evidence" value="ECO:0007669"/>
    <property type="project" value="InterPro"/>
</dbReference>
<dbReference type="GO" id="GO:0006284">
    <property type="term" value="P:base-excision repair"/>
    <property type="evidence" value="ECO:0007669"/>
    <property type="project" value="InterPro"/>
</dbReference>
<dbReference type="CDD" id="cd00540">
    <property type="entry name" value="AAG"/>
    <property type="match status" value="1"/>
</dbReference>
<dbReference type="FunFam" id="3.10.300.10:FF:000001">
    <property type="entry name" value="Putative 3-methyladenine DNA glycosylase"/>
    <property type="match status" value="1"/>
</dbReference>
<dbReference type="Gene3D" id="3.10.300.10">
    <property type="entry name" value="Methylpurine-DNA glycosylase (MPG)"/>
    <property type="match status" value="1"/>
</dbReference>
<dbReference type="HAMAP" id="MF_00527">
    <property type="entry name" value="3MGH"/>
    <property type="match status" value="1"/>
</dbReference>
<dbReference type="InterPro" id="IPR011034">
    <property type="entry name" value="Formyl_transferase-like_C_sf"/>
</dbReference>
<dbReference type="InterPro" id="IPR003180">
    <property type="entry name" value="MPG"/>
</dbReference>
<dbReference type="InterPro" id="IPR036995">
    <property type="entry name" value="MPG_sf"/>
</dbReference>
<dbReference type="NCBIfam" id="TIGR00567">
    <property type="entry name" value="3mg"/>
    <property type="match status" value="1"/>
</dbReference>
<dbReference type="PANTHER" id="PTHR10429">
    <property type="entry name" value="DNA-3-METHYLADENINE GLYCOSYLASE"/>
    <property type="match status" value="1"/>
</dbReference>
<dbReference type="PANTHER" id="PTHR10429:SF0">
    <property type="entry name" value="DNA-3-METHYLADENINE GLYCOSYLASE"/>
    <property type="match status" value="1"/>
</dbReference>
<dbReference type="Pfam" id="PF02245">
    <property type="entry name" value="Pur_DNA_glyco"/>
    <property type="match status" value="1"/>
</dbReference>
<dbReference type="SUPFAM" id="SSF50486">
    <property type="entry name" value="FMT C-terminal domain-like"/>
    <property type="match status" value="1"/>
</dbReference>